<name>HTPX_VARPS</name>
<comment type="cofactor">
    <cofactor evidence="1">
        <name>Zn(2+)</name>
        <dbReference type="ChEBI" id="CHEBI:29105"/>
    </cofactor>
    <text evidence="1">Binds 1 zinc ion per subunit.</text>
</comment>
<comment type="subcellular location">
    <subcellularLocation>
        <location evidence="1">Cell inner membrane</location>
        <topology evidence="1">Multi-pass membrane protein</topology>
    </subcellularLocation>
</comment>
<comment type="similarity">
    <text evidence="1">Belongs to the peptidase M48B family.</text>
</comment>
<gene>
    <name evidence="1" type="primary">htpX</name>
    <name type="ordered locus">Vapar_0859</name>
</gene>
<sequence length="290" mass="30802">MKRILLFVLTNVMVVAVLGIVASLLGVNRFLTANGLNLTALLGFALVMGFGGAIISLLISKPMAKWTTKLHMIDNPQSPDEAWIVGTVRKFADKAGIGMPEVGIFEGEPNAFATGAFKNSSLVAVSTGLLQNMTREEVEAVIGHEVAHIANGDMVTMTLIQGVMNTFVVFLSRVIGYAVDSFLRRGDDRSSGPGIGYYVSTIVLDIVLGFAAAIVVAWFSRQREFRADAGSAALMGQKQPMMNALARLGGLPAGELPKAVEAMGITGSIGKLFATHPPIEERIAALQNAR</sequence>
<dbReference type="EC" id="3.4.24.-" evidence="1"/>
<dbReference type="EMBL" id="CP001635">
    <property type="protein sequence ID" value="ACS17512.1"/>
    <property type="molecule type" value="Genomic_DNA"/>
</dbReference>
<dbReference type="SMR" id="C5CML1"/>
<dbReference type="STRING" id="543728.Vapar_0859"/>
<dbReference type="MEROPS" id="M48.002"/>
<dbReference type="KEGG" id="vap:Vapar_0859"/>
<dbReference type="eggNOG" id="COG0501">
    <property type="taxonomic scope" value="Bacteria"/>
</dbReference>
<dbReference type="HOGENOM" id="CLU_042266_1_0_4"/>
<dbReference type="OrthoDB" id="15218at2"/>
<dbReference type="GO" id="GO:0005886">
    <property type="term" value="C:plasma membrane"/>
    <property type="evidence" value="ECO:0007669"/>
    <property type="project" value="UniProtKB-SubCell"/>
</dbReference>
<dbReference type="GO" id="GO:0004222">
    <property type="term" value="F:metalloendopeptidase activity"/>
    <property type="evidence" value="ECO:0007669"/>
    <property type="project" value="UniProtKB-UniRule"/>
</dbReference>
<dbReference type="GO" id="GO:0008270">
    <property type="term" value="F:zinc ion binding"/>
    <property type="evidence" value="ECO:0007669"/>
    <property type="project" value="UniProtKB-UniRule"/>
</dbReference>
<dbReference type="GO" id="GO:0006508">
    <property type="term" value="P:proteolysis"/>
    <property type="evidence" value="ECO:0007669"/>
    <property type="project" value="UniProtKB-KW"/>
</dbReference>
<dbReference type="CDD" id="cd07335">
    <property type="entry name" value="M48B_HtpX_like"/>
    <property type="match status" value="1"/>
</dbReference>
<dbReference type="Gene3D" id="3.30.2010.10">
    <property type="entry name" value="Metalloproteases ('zincins'), catalytic domain"/>
    <property type="match status" value="1"/>
</dbReference>
<dbReference type="HAMAP" id="MF_00188">
    <property type="entry name" value="Pept_M48_protease_HtpX"/>
    <property type="match status" value="1"/>
</dbReference>
<dbReference type="InterPro" id="IPR050083">
    <property type="entry name" value="HtpX_protease"/>
</dbReference>
<dbReference type="InterPro" id="IPR022919">
    <property type="entry name" value="Pept_M48_protease_HtpX"/>
</dbReference>
<dbReference type="InterPro" id="IPR001915">
    <property type="entry name" value="Peptidase_M48"/>
</dbReference>
<dbReference type="NCBIfam" id="NF003965">
    <property type="entry name" value="PRK05457.1"/>
    <property type="match status" value="1"/>
</dbReference>
<dbReference type="PANTHER" id="PTHR43221">
    <property type="entry name" value="PROTEASE HTPX"/>
    <property type="match status" value="1"/>
</dbReference>
<dbReference type="PANTHER" id="PTHR43221:SF1">
    <property type="entry name" value="PROTEASE HTPX"/>
    <property type="match status" value="1"/>
</dbReference>
<dbReference type="Pfam" id="PF01435">
    <property type="entry name" value="Peptidase_M48"/>
    <property type="match status" value="1"/>
</dbReference>
<accession>C5CML1</accession>
<organism>
    <name type="scientific">Variovorax paradoxus (strain S110)</name>
    <dbReference type="NCBI Taxonomy" id="543728"/>
    <lineage>
        <taxon>Bacteria</taxon>
        <taxon>Pseudomonadati</taxon>
        <taxon>Pseudomonadota</taxon>
        <taxon>Betaproteobacteria</taxon>
        <taxon>Burkholderiales</taxon>
        <taxon>Comamonadaceae</taxon>
        <taxon>Variovorax</taxon>
    </lineage>
</organism>
<evidence type="ECO:0000255" key="1">
    <source>
        <dbReference type="HAMAP-Rule" id="MF_00188"/>
    </source>
</evidence>
<keyword id="KW-0997">Cell inner membrane</keyword>
<keyword id="KW-1003">Cell membrane</keyword>
<keyword id="KW-0378">Hydrolase</keyword>
<keyword id="KW-0472">Membrane</keyword>
<keyword id="KW-0479">Metal-binding</keyword>
<keyword id="KW-0482">Metalloprotease</keyword>
<keyword id="KW-0645">Protease</keyword>
<keyword id="KW-0812">Transmembrane</keyword>
<keyword id="KW-1133">Transmembrane helix</keyword>
<keyword id="KW-0862">Zinc</keyword>
<proteinExistence type="inferred from homology"/>
<protein>
    <recommendedName>
        <fullName evidence="1">Protease HtpX homolog</fullName>
        <ecNumber evidence="1">3.4.24.-</ecNumber>
    </recommendedName>
</protein>
<feature type="chain" id="PRO_1000203983" description="Protease HtpX homolog">
    <location>
        <begin position="1"/>
        <end position="290"/>
    </location>
</feature>
<feature type="transmembrane region" description="Helical" evidence="1">
    <location>
        <begin position="4"/>
        <end position="24"/>
    </location>
</feature>
<feature type="transmembrane region" description="Helical" evidence="1">
    <location>
        <begin position="39"/>
        <end position="59"/>
    </location>
</feature>
<feature type="transmembrane region" description="Helical" evidence="1">
    <location>
        <begin position="159"/>
        <end position="179"/>
    </location>
</feature>
<feature type="transmembrane region" description="Helical" evidence="1">
    <location>
        <begin position="199"/>
        <end position="219"/>
    </location>
</feature>
<feature type="active site" evidence="1">
    <location>
        <position position="145"/>
    </location>
</feature>
<feature type="binding site" evidence="1">
    <location>
        <position position="144"/>
    </location>
    <ligand>
        <name>Zn(2+)</name>
        <dbReference type="ChEBI" id="CHEBI:29105"/>
        <note>catalytic</note>
    </ligand>
</feature>
<feature type="binding site" evidence="1">
    <location>
        <position position="148"/>
    </location>
    <ligand>
        <name>Zn(2+)</name>
        <dbReference type="ChEBI" id="CHEBI:29105"/>
        <note>catalytic</note>
    </ligand>
</feature>
<feature type="binding site" evidence="1">
    <location>
        <position position="224"/>
    </location>
    <ligand>
        <name>Zn(2+)</name>
        <dbReference type="ChEBI" id="CHEBI:29105"/>
        <note>catalytic</note>
    </ligand>
</feature>
<reference key="1">
    <citation type="journal article" date="2011" name="J. Bacteriol.">
        <title>Complete genome sequence of the metabolically versatile plant growth-promoting endophyte, Variovorax paradoxus S110.</title>
        <authorList>
            <person name="Han J.I."/>
            <person name="Choi H.K."/>
            <person name="Lee S.W."/>
            <person name="Orwin P.M."/>
            <person name="Kim J."/>
            <person name="Laroe S.L."/>
            <person name="Kim T.G."/>
            <person name="O'Neil J."/>
            <person name="Leadbetter J.R."/>
            <person name="Lee S.Y."/>
            <person name="Hur C.G."/>
            <person name="Spain J.C."/>
            <person name="Ovchinnikova G."/>
            <person name="Goodwin L."/>
            <person name="Han C."/>
        </authorList>
    </citation>
    <scope>NUCLEOTIDE SEQUENCE [LARGE SCALE GENOMIC DNA]</scope>
    <source>
        <strain>S110</strain>
    </source>
</reference>